<sequence>MALFGALFLALLAGAHAEFPGCKIRVTSKALELVKQEGLRFLEQELETITIPDLRGKEGHFYYNISEVKVTELQLTSSELDFQPQQELMLQITNASLGLRFRRQLLYWFFYDGGYINASAEGVSIRTGLELSRDPAGRMKVSNVSCQASVSRMHAAFGGTFKKVYDFLSTFITSGMRFLLNQQICPVLYHAGTVLLNSLLDTVPVRSSVDELVGIDYSLMKDPVASTSNLDMDFRGAFFPLTERNWSLPNRAVEPQLQEEERMVYVAFSEFFFDSAMESYFRAGALQLLLVGDKVPHDLDMLLRATYFGSIVLLSPAVIDSPLKLELRVLAPPRCTIKPSGTTISVTASVTIALVPPDQPEVQLSSMTMDARLSAKMALRGKALRTQLDLRRFRIYSNHSALESLALIPLQAPLKTMLQIGVMPMLNERTWRGVQIPLPEGINFVHEVVTNHAGFLTIGADLHFAKGLREVIEKNRPADVRASTAPTPSTAAV</sequence>
<proteinExistence type="evidence at protein level"/>
<reference key="1">
    <citation type="journal article" date="1994" name="J. Biol. Chem.">
        <title>Complete cDNA encoding human phospholipid transfer protein from human endothelial cells.</title>
        <authorList>
            <person name="Day J.R."/>
            <person name="Albers J.J."/>
            <person name="Lofton-Day C.E."/>
            <person name="Gilbert T.L."/>
            <person name="Ching A.F.T."/>
            <person name="Grant F.J."/>
            <person name="O'Hara P.J."/>
            <person name="Marcovina S.M."/>
            <person name="Adolphson J.L."/>
        </authorList>
    </citation>
    <scope>NUCLEOTIDE SEQUENCE [MRNA] (ISOFORM 1)</scope>
    <scope>PROTEIN SEQUENCE OF 18-27 AND 163-184</scope>
    <source>
        <tissue>Umbilical vein endothelial cell</tissue>
    </source>
</reference>
<reference key="2">
    <citation type="submission" date="2001-12" db="EMBL/GenBank/DDBJ databases">
        <title>Molecular cloning and functional characterization of phospholipid transfer protein from human placenta cDNA library.</title>
        <authorList>
            <person name="Kobayashi Y."/>
            <person name="Ohshiro N."/>
            <person name="Shibusawa A."/>
            <person name="Sasaki T."/>
            <person name="Tokuyama S."/>
            <person name="Yamamoto T."/>
        </authorList>
    </citation>
    <scope>NUCLEOTIDE SEQUENCE [MRNA] (ISOFORM 1)</scope>
    <source>
        <tissue>Placenta</tissue>
    </source>
</reference>
<reference key="3">
    <citation type="submission" date="2003-12" db="EMBL/GenBank/DDBJ databases">
        <authorList>
            <consortium name="SeattleSNPs variation discovery resource"/>
        </authorList>
    </citation>
    <scope>NUCLEOTIDE SEQUENCE [GENOMIC DNA]</scope>
    <scope>ALTERNATIVE SPLICING (ISOFORM 1)</scope>
    <scope>VARIANTS TYR-124 AND ILE-425</scope>
</reference>
<reference key="4">
    <citation type="journal article" date="2004" name="Nat. Genet.">
        <title>Complete sequencing and characterization of 21,243 full-length human cDNAs.</title>
        <authorList>
            <person name="Ota T."/>
            <person name="Suzuki Y."/>
            <person name="Nishikawa T."/>
            <person name="Otsuki T."/>
            <person name="Sugiyama T."/>
            <person name="Irie R."/>
            <person name="Wakamatsu A."/>
            <person name="Hayashi K."/>
            <person name="Sato H."/>
            <person name="Nagai K."/>
            <person name="Kimura K."/>
            <person name="Makita H."/>
            <person name="Sekine M."/>
            <person name="Obayashi M."/>
            <person name="Nishi T."/>
            <person name="Shibahara T."/>
            <person name="Tanaka T."/>
            <person name="Ishii S."/>
            <person name="Yamamoto J."/>
            <person name="Saito K."/>
            <person name="Kawai Y."/>
            <person name="Isono Y."/>
            <person name="Nakamura Y."/>
            <person name="Nagahari K."/>
            <person name="Murakami K."/>
            <person name="Yasuda T."/>
            <person name="Iwayanagi T."/>
            <person name="Wagatsuma M."/>
            <person name="Shiratori A."/>
            <person name="Sudo H."/>
            <person name="Hosoiri T."/>
            <person name="Kaku Y."/>
            <person name="Kodaira H."/>
            <person name="Kondo H."/>
            <person name="Sugawara M."/>
            <person name="Takahashi M."/>
            <person name="Kanda K."/>
            <person name="Yokoi T."/>
            <person name="Furuya T."/>
            <person name="Kikkawa E."/>
            <person name="Omura Y."/>
            <person name="Abe K."/>
            <person name="Kamihara K."/>
            <person name="Katsuta N."/>
            <person name="Sato K."/>
            <person name="Tanikawa M."/>
            <person name="Yamazaki M."/>
            <person name="Ninomiya K."/>
            <person name="Ishibashi T."/>
            <person name="Yamashita H."/>
            <person name="Murakawa K."/>
            <person name="Fujimori K."/>
            <person name="Tanai H."/>
            <person name="Kimata M."/>
            <person name="Watanabe M."/>
            <person name="Hiraoka S."/>
            <person name="Chiba Y."/>
            <person name="Ishida S."/>
            <person name="Ono Y."/>
            <person name="Takiguchi S."/>
            <person name="Watanabe S."/>
            <person name="Yosida M."/>
            <person name="Hotuta T."/>
            <person name="Kusano J."/>
            <person name="Kanehori K."/>
            <person name="Takahashi-Fujii A."/>
            <person name="Hara H."/>
            <person name="Tanase T.-O."/>
            <person name="Nomura Y."/>
            <person name="Togiya S."/>
            <person name="Komai F."/>
            <person name="Hara R."/>
            <person name="Takeuchi K."/>
            <person name="Arita M."/>
            <person name="Imose N."/>
            <person name="Musashino K."/>
            <person name="Yuuki H."/>
            <person name="Oshima A."/>
            <person name="Sasaki N."/>
            <person name="Aotsuka S."/>
            <person name="Yoshikawa Y."/>
            <person name="Matsunawa H."/>
            <person name="Ichihara T."/>
            <person name="Shiohata N."/>
            <person name="Sano S."/>
            <person name="Moriya S."/>
            <person name="Momiyama H."/>
            <person name="Satoh N."/>
            <person name="Takami S."/>
            <person name="Terashima Y."/>
            <person name="Suzuki O."/>
            <person name="Nakagawa S."/>
            <person name="Senoh A."/>
            <person name="Mizoguchi H."/>
            <person name="Goto Y."/>
            <person name="Shimizu F."/>
            <person name="Wakebe H."/>
            <person name="Hishigaki H."/>
            <person name="Watanabe T."/>
            <person name="Sugiyama A."/>
            <person name="Takemoto M."/>
            <person name="Kawakami B."/>
            <person name="Yamazaki M."/>
            <person name="Watanabe K."/>
            <person name="Kumagai A."/>
            <person name="Itakura S."/>
            <person name="Fukuzumi Y."/>
            <person name="Fujimori Y."/>
            <person name="Komiyama M."/>
            <person name="Tashiro H."/>
            <person name="Tanigami A."/>
            <person name="Fujiwara T."/>
            <person name="Ono T."/>
            <person name="Yamada K."/>
            <person name="Fujii Y."/>
            <person name="Ozaki K."/>
            <person name="Hirao M."/>
            <person name="Ohmori Y."/>
            <person name="Kawabata A."/>
            <person name="Hikiji T."/>
            <person name="Kobatake N."/>
            <person name="Inagaki H."/>
            <person name="Ikema Y."/>
            <person name="Okamoto S."/>
            <person name="Okitani R."/>
            <person name="Kawakami T."/>
            <person name="Noguchi S."/>
            <person name="Itoh T."/>
            <person name="Shigeta K."/>
            <person name="Senba T."/>
            <person name="Matsumura K."/>
            <person name="Nakajima Y."/>
            <person name="Mizuno T."/>
            <person name="Morinaga M."/>
            <person name="Sasaki M."/>
            <person name="Togashi T."/>
            <person name="Oyama M."/>
            <person name="Hata H."/>
            <person name="Watanabe M."/>
            <person name="Komatsu T."/>
            <person name="Mizushima-Sugano J."/>
            <person name="Satoh T."/>
            <person name="Shirai Y."/>
            <person name="Takahashi Y."/>
            <person name="Nakagawa K."/>
            <person name="Okumura K."/>
            <person name="Nagase T."/>
            <person name="Nomura N."/>
            <person name="Kikuchi H."/>
            <person name="Masuho Y."/>
            <person name="Yamashita R."/>
            <person name="Nakai K."/>
            <person name="Yada T."/>
            <person name="Nakamura Y."/>
            <person name="Ohara O."/>
            <person name="Isogai T."/>
            <person name="Sugano S."/>
        </authorList>
    </citation>
    <scope>NUCLEOTIDE SEQUENCE [LARGE SCALE MRNA] (ISOFORMS 2; 3 AND 4)</scope>
    <source>
        <tissue>Adipose tissue</tissue>
    </source>
</reference>
<reference key="5">
    <citation type="journal article" date="2001" name="Nature">
        <title>The DNA sequence and comparative analysis of human chromosome 20.</title>
        <authorList>
            <person name="Deloukas P."/>
            <person name="Matthews L.H."/>
            <person name="Ashurst J.L."/>
            <person name="Burton J."/>
            <person name="Gilbert J.G.R."/>
            <person name="Jones M."/>
            <person name="Stavrides G."/>
            <person name="Almeida J.P."/>
            <person name="Babbage A.K."/>
            <person name="Bagguley C.L."/>
            <person name="Bailey J."/>
            <person name="Barlow K.F."/>
            <person name="Bates K.N."/>
            <person name="Beard L.M."/>
            <person name="Beare D.M."/>
            <person name="Beasley O.P."/>
            <person name="Bird C.P."/>
            <person name="Blakey S.E."/>
            <person name="Bridgeman A.M."/>
            <person name="Brown A.J."/>
            <person name="Buck D."/>
            <person name="Burrill W.D."/>
            <person name="Butler A.P."/>
            <person name="Carder C."/>
            <person name="Carter N.P."/>
            <person name="Chapman J.C."/>
            <person name="Clamp M."/>
            <person name="Clark G."/>
            <person name="Clark L.N."/>
            <person name="Clark S.Y."/>
            <person name="Clee C.M."/>
            <person name="Clegg S."/>
            <person name="Cobley V.E."/>
            <person name="Collier R.E."/>
            <person name="Connor R.E."/>
            <person name="Corby N.R."/>
            <person name="Coulson A."/>
            <person name="Coville G.J."/>
            <person name="Deadman R."/>
            <person name="Dhami P.D."/>
            <person name="Dunn M."/>
            <person name="Ellington A.G."/>
            <person name="Frankland J.A."/>
            <person name="Fraser A."/>
            <person name="French L."/>
            <person name="Garner P."/>
            <person name="Grafham D.V."/>
            <person name="Griffiths C."/>
            <person name="Griffiths M.N.D."/>
            <person name="Gwilliam R."/>
            <person name="Hall R.E."/>
            <person name="Hammond S."/>
            <person name="Harley J.L."/>
            <person name="Heath P.D."/>
            <person name="Ho S."/>
            <person name="Holden J.L."/>
            <person name="Howden P.J."/>
            <person name="Huckle E."/>
            <person name="Hunt A.R."/>
            <person name="Hunt S.E."/>
            <person name="Jekosch K."/>
            <person name="Johnson C.M."/>
            <person name="Johnson D."/>
            <person name="Kay M.P."/>
            <person name="Kimberley A.M."/>
            <person name="King A."/>
            <person name="Knights A."/>
            <person name="Laird G.K."/>
            <person name="Lawlor S."/>
            <person name="Lehvaeslaiho M.H."/>
            <person name="Leversha M.A."/>
            <person name="Lloyd C."/>
            <person name="Lloyd D.M."/>
            <person name="Lovell J.D."/>
            <person name="Marsh V.L."/>
            <person name="Martin S.L."/>
            <person name="McConnachie L.J."/>
            <person name="McLay K."/>
            <person name="McMurray A.A."/>
            <person name="Milne S.A."/>
            <person name="Mistry D."/>
            <person name="Moore M.J.F."/>
            <person name="Mullikin J.C."/>
            <person name="Nickerson T."/>
            <person name="Oliver K."/>
            <person name="Parker A."/>
            <person name="Patel R."/>
            <person name="Pearce T.A.V."/>
            <person name="Peck A.I."/>
            <person name="Phillimore B.J.C.T."/>
            <person name="Prathalingam S.R."/>
            <person name="Plumb R.W."/>
            <person name="Ramsay H."/>
            <person name="Rice C.M."/>
            <person name="Ross M.T."/>
            <person name="Scott C.E."/>
            <person name="Sehra H.K."/>
            <person name="Shownkeen R."/>
            <person name="Sims S."/>
            <person name="Skuce C.D."/>
            <person name="Smith M.L."/>
            <person name="Soderlund C."/>
            <person name="Steward C.A."/>
            <person name="Sulston J.E."/>
            <person name="Swann R.M."/>
            <person name="Sycamore N."/>
            <person name="Taylor R."/>
            <person name="Tee L."/>
            <person name="Thomas D.W."/>
            <person name="Thorpe A."/>
            <person name="Tracey A."/>
            <person name="Tromans A.C."/>
            <person name="Vaudin M."/>
            <person name="Wall M."/>
            <person name="Wallis J.M."/>
            <person name="Whitehead S.L."/>
            <person name="Whittaker P."/>
            <person name="Willey D.L."/>
            <person name="Williams L."/>
            <person name="Williams S.A."/>
            <person name="Wilming L."/>
            <person name="Wray P.W."/>
            <person name="Hubbard T."/>
            <person name="Durbin R.M."/>
            <person name="Bentley D.R."/>
            <person name="Beck S."/>
            <person name="Rogers J."/>
        </authorList>
    </citation>
    <scope>NUCLEOTIDE SEQUENCE [LARGE SCALE GENOMIC DNA]</scope>
</reference>
<reference key="6">
    <citation type="submission" date="2005-09" db="EMBL/GenBank/DDBJ databases">
        <authorList>
            <person name="Mural R.J."/>
            <person name="Istrail S."/>
            <person name="Sutton G.G."/>
            <person name="Florea L."/>
            <person name="Halpern A.L."/>
            <person name="Mobarry C.M."/>
            <person name="Lippert R."/>
            <person name="Walenz B."/>
            <person name="Shatkay H."/>
            <person name="Dew I."/>
            <person name="Miller J.R."/>
            <person name="Flanigan M.J."/>
            <person name="Edwards N.J."/>
            <person name="Bolanos R."/>
            <person name="Fasulo D."/>
            <person name="Halldorsson B.V."/>
            <person name="Hannenhalli S."/>
            <person name="Turner R."/>
            <person name="Yooseph S."/>
            <person name="Lu F."/>
            <person name="Nusskern D.R."/>
            <person name="Shue B.C."/>
            <person name="Zheng X.H."/>
            <person name="Zhong F."/>
            <person name="Delcher A.L."/>
            <person name="Huson D.H."/>
            <person name="Kravitz S.A."/>
            <person name="Mouchard L."/>
            <person name="Reinert K."/>
            <person name="Remington K.A."/>
            <person name="Clark A.G."/>
            <person name="Waterman M.S."/>
            <person name="Eichler E.E."/>
            <person name="Adams M.D."/>
            <person name="Hunkapiller M.W."/>
            <person name="Myers E.W."/>
            <person name="Venter J.C."/>
        </authorList>
    </citation>
    <scope>NUCLEOTIDE SEQUENCE [LARGE SCALE GENOMIC DNA]</scope>
</reference>
<reference key="7">
    <citation type="journal article" date="2004" name="Genome Res.">
        <title>The status, quality, and expansion of the NIH full-length cDNA project: the Mammalian Gene Collection (MGC).</title>
        <authorList>
            <consortium name="The MGC Project Team"/>
        </authorList>
    </citation>
    <scope>NUCLEOTIDE SEQUENCE [LARGE SCALE MRNA] (ISOFORMS 1 AND 2)</scope>
    <source>
        <tissue>Brain</tissue>
        <tissue>Placenta</tissue>
    </source>
</reference>
<reference key="8">
    <citation type="journal article" date="1995" name="Biochim. Biophys. Acta">
        <title>Functional expression of human and mouse plasma phospholipid transfer protein: effect of recombinant and plasma PLTP on HDL subspecies.</title>
        <authorList>
            <person name="Albers J.J."/>
            <person name="Wolfbauer G."/>
            <person name="Cheung M.C."/>
            <person name="Day J.R."/>
            <person name="Ching A.F.T."/>
            <person name="Lok S."/>
            <person name="Tu A.-Y."/>
        </authorList>
    </citation>
    <scope>FUNCTION</scope>
    <scope>CATALYTIC ACTIVITY</scope>
    <scope>TISSUE SPECIFICITY</scope>
</reference>
<reference key="9">
    <citation type="journal article" date="1997" name="Biochemistry">
        <title>Molecular and macromolecular specificity of human plasma phospholipid transfer protein.</title>
        <authorList>
            <person name="Rao R."/>
            <person name="Albers J.J."/>
            <person name="Wolfbauer G."/>
            <person name="Pownall H.J."/>
        </authorList>
    </citation>
    <scope>FUNCTION</scope>
    <scope>CATALYTIC ACTIVITY</scope>
</reference>
<reference key="10">
    <citation type="journal article" date="1999" name="J. Protein Chem.">
        <title>Role of cysteine residues in human plasma phospholipid transfer protein.</title>
        <authorList>
            <person name="Qu S.J."/>
            <person name="Fan H.Z."/>
            <person name="Kilinc C."/>
            <person name="Pownall H.J."/>
        </authorList>
    </citation>
    <scope>DISULFIDE BOND</scope>
</reference>
<reference key="11">
    <citation type="journal article" date="2000" name="J. Lipid Res.">
        <title>Distribution of phospholipid transfer protein in human plasma: presence of two forms of phospholipid transfer protein, one catalytically active and the other inactive.</title>
        <authorList>
            <person name="Oka T."/>
            <person name="Kujiraoka T."/>
            <person name="Ito M."/>
            <person name="Egashira T."/>
            <person name="Takahashi S."/>
            <person name="Nanjee M.N."/>
            <person name="Miller N.E."/>
            <person name="Metso J."/>
            <person name="Olkkonen V.M."/>
            <person name="Ehnholm C."/>
            <person name="Jauhiainen M."/>
            <person name="Hattori H."/>
        </authorList>
    </citation>
    <scope>FUNCTION</scope>
    <scope>CATALYTIC ACTIVITY</scope>
</reference>
<reference key="12">
    <citation type="journal article" date="2005" name="J. Proteome Res.">
        <title>Human plasma N-glycoproteome analysis by immunoaffinity subtraction, hydrazide chemistry, and mass spectrometry.</title>
        <authorList>
            <person name="Liu T."/>
            <person name="Qian W.-J."/>
            <person name="Gritsenko M.A."/>
            <person name="Camp D.G. II"/>
            <person name="Monroe M.E."/>
            <person name="Moore R.J."/>
            <person name="Smith R.D."/>
        </authorList>
    </citation>
    <scope>GLYCOSYLATION [LARGE SCALE ANALYSIS] AT ASN-64; ASN-94; ASN-143; ASN-245 AND ASN-398</scope>
    <source>
        <tissue>Plasma</tissue>
    </source>
</reference>
<reference key="13">
    <citation type="journal article" date="2008" name="Proc. Natl. Acad. Sci. U.S.A.">
        <title>A quantitative atlas of mitotic phosphorylation.</title>
        <authorList>
            <person name="Dephoure N."/>
            <person name="Zhou C."/>
            <person name="Villen J."/>
            <person name="Beausoleil S.A."/>
            <person name="Bakalarski C.E."/>
            <person name="Elledge S.J."/>
            <person name="Gygi S.P."/>
        </authorList>
    </citation>
    <scope>IDENTIFICATION BY MASS SPECTROMETRY [LARGE SCALE ANALYSIS]</scope>
    <source>
        <tissue>Cervix carcinoma</tissue>
    </source>
</reference>
<reference key="14">
    <citation type="journal article" date="2009" name="Biochim. Biophys. Acta">
        <title>PLTP is present in the nucleus, and its nuclear export is CRM1-dependent.</title>
        <authorList>
            <person name="Vuletic S."/>
            <person name="Dong W."/>
            <person name="Wolfbauer G."/>
            <person name="Day J.R."/>
            <person name="Albers J.J."/>
        </authorList>
    </citation>
    <scope>FUNCTION</scope>
    <scope>CATALYTIC ACTIVITY</scope>
    <scope>SUBCELLULAR LOCATION</scope>
    <scope>TISSUE SPECIFICITY</scope>
    <scope>MUTAGENESIS OF ASN-64; ASN-94; ASN-117 AND ASN-143</scope>
</reference>
<reference key="15">
    <citation type="journal article" date="2009" name="J. Proteome Res.">
        <title>Glycoproteomics analysis of human liver tissue by combination of multiple enzyme digestion and hydrazide chemistry.</title>
        <authorList>
            <person name="Chen R."/>
            <person name="Jiang X."/>
            <person name="Sun D."/>
            <person name="Han G."/>
            <person name="Wang F."/>
            <person name="Ye M."/>
            <person name="Wang L."/>
            <person name="Zou H."/>
        </authorList>
    </citation>
    <scope>GLYCOSYLATION [LARGE SCALE ANALYSIS] AT ASN-64</scope>
    <source>
        <tissue>Liver</tissue>
    </source>
</reference>
<reference key="16">
    <citation type="journal article" date="2009" name="Mol. Cell. Proteomics">
        <title>A strategy for precise and large scale identification of core fucosylated glycoproteins.</title>
        <authorList>
            <person name="Jia W."/>
            <person name="Lu Z."/>
            <person name="Fu Y."/>
            <person name="Wang H.P."/>
            <person name="Wang L.H."/>
            <person name="Chi H."/>
            <person name="Yuan Z.F."/>
            <person name="Zheng Z.B."/>
            <person name="Song L.N."/>
            <person name="Han H.H."/>
            <person name="Liang Y.M."/>
            <person name="Wang J.L."/>
            <person name="Cai Y."/>
            <person name="Zhang Y.K."/>
            <person name="Deng Y.L."/>
            <person name="Ying W.T."/>
            <person name="He S.M."/>
            <person name="Qian X.H."/>
        </authorList>
    </citation>
    <scope>GLYCOSYLATION AT ASN-64; ASN-143 AND ASN-245</scope>
</reference>
<reference key="17">
    <citation type="journal article" date="2011" name="Biochim. Biophys. Acta">
        <title>Impact of site-specific N-glycosylation on cellular secretion, activity and specific activity of the plasma phospholipid transfer protein.</title>
        <authorList>
            <person name="Albers J.J."/>
            <person name="Day J.R."/>
            <person name="Wolfbauer G."/>
            <person name="Kennedy H."/>
            <person name="Vuletic S."/>
            <person name="Cheung M.C."/>
        </authorList>
    </citation>
    <scope>FUNCTION</scope>
    <scope>CATALYTIC ACTIVITY</scope>
    <scope>GLYCOSYLATION AT ASN-64; ASN-94; ASN-117; ASN-143; ASN-245 AND ASN-398</scope>
    <scope>MUTAGENESIS OF SER-66; SER-96; SER-119; SER-145; SER-247 AND SER-400</scope>
</reference>
<reference key="18">
    <citation type="journal article" date="2012" name="Biochim. Biophys. Acta">
        <title>Role of plasma phospholipid transfer protein in lipid and lipoprotein metabolism.</title>
        <authorList>
            <person name="Albers J.J."/>
            <person name="Vuletic S."/>
            <person name="Cheung M.C."/>
        </authorList>
    </citation>
    <scope>REVIEW ON FUNCTION</scope>
</reference>
<reference key="19">
    <citation type="journal article" date="2003" name="Hum. Mol. Genet.">
        <title>Association of extreme blood lipid profile phenotypic variation with 11 reverse cholesterol transport genes and 10 non-genetic cardiovascular disease risk factors.</title>
        <authorList>
            <person name="Morabia A."/>
            <person name="Cayanis E."/>
            <person name="Costanza M.C."/>
            <person name="Ross B.M."/>
            <person name="Flaherty M.S."/>
            <person name="Alvin G.B."/>
            <person name="Das K."/>
            <person name="Gilliam T.C."/>
        </authorList>
    </citation>
    <scope>VARIANTS GLN-282; HIS-372 AND TRP-380</scope>
</reference>
<reference key="20">
    <citation type="journal article" date="2018" name="Biochim. Biophys. Acta">
        <title>Structural basis of the lipid transfer mechanism of phospholipid transfer protein (PLTP).</title>
        <authorList>
            <person name="Zhang M."/>
            <person name="Zhai X."/>
            <person name="Li J."/>
            <person name="Albers J.J."/>
            <person name="Vuletic S."/>
            <person name="Ren G."/>
        </authorList>
    </citation>
    <scope>3D-STRUCTURE MODELING</scope>
    <scope>STRUCTURE BY ELECTRON CRYOMICROSCOPY</scope>
    <scope>FUNCTION</scope>
    <scope>CATALYTIC ACTIVITY</scope>
    <scope>MUTAGENESIS OF MET-176</scope>
</reference>
<accession>P55058</accession>
<accession>A8K006</accession>
<accession>B4DDD5</accession>
<accession>B4DRB4</accession>
<accession>E1P5N8</accession>
<accession>E7EV16</accession>
<accession>Q8WTT1</accession>
<accession>Q9BR07</accession>
<accession>Q9BSH8</accession>
<keyword id="KW-0025">Alternative splicing</keyword>
<keyword id="KW-0903">Direct protein sequencing</keyword>
<keyword id="KW-1015">Disulfide bond</keyword>
<keyword id="KW-0325">Glycoprotein</keyword>
<keyword id="KW-0445">Lipid transport</keyword>
<keyword id="KW-0539">Nucleus</keyword>
<keyword id="KW-1267">Proteomics identification</keyword>
<keyword id="KW-1185">Reference proteome</keyword>
<keyword id="KW-0964">Secreted</keyword>
<keyword id="KW-0732">Signal</keyword>
<keyword id="KW-0813">Transport</keyword>
<evidence type="ECO:0000250" key="1">
    <source>
        <dbReference type="UniProtKB" id="P55065"/>
    </source>
</evidence>
<evidence type="ECO:0000269" key="2">
    <source>
    </source>
</evidence>
<evidence type="ECO:0000269" key="3">
    <source>
    </source>
</evidence>
<evidence type="ECO:0000269" key="4">
    <source>
    </source>
</evidence>
<evidence type="ECO:0000269" key="5">
    <source>
    </source>
</evidence>
<evidence type="ECO:0000269" key="6">
    <source>
    </source>
</evidence>
<evidence type="ECO:0000269" key="7">
    <source>
    </source>
</evidence>
<evidence type="ECO:0000269" key="8">
    <source>
    </source>
</evidence>
<evidence type="ECO:0000269" key="9">
    <source>
    </source>
</evidence>
<evidence type="ECO:0000269" key="10">
    <source>
    </source>
</evidence>
<evidence type="ECO:0000269" key="11">
    <source>
    </source>
</evidence>
<evidence type="ECO:0000269" key="12">
    <source>
    </source>
</evidence>
<evidence type="ECO:0000269" key="13">
    <source>
    </source>
</evidence>
<evidence type="ECO:0000269" key="14">
    <source ref="3"/>
</evidence>
<evidence type="ECO:0000303" key="15">
    <source>
    </source>
</evidence>
<evidence type="ECO:0000303" key="16">
    <source>
    </source>
</evidence>
<evidence type="ECO:0000303" key="17">
    <source>
    </source>
</evidence>
<evidence type="ECO:0000305" key="18"/>
<evidence type="ECO:0000305" key="19">
    <source>
    </source>
</evidence>
<protein>
    <recommendedName>
        <fullName>Phospholipid transfer protein</fullName>
    </recommendedName>
    <alternativeName>
        <fullName>Lipid transfer protein II</fullName>
    </alternativeName>
</protein>
<organism>
    <name type="scientific">Homo sapiens</name>
    <name type="common">Human</name>
    <dbReference type="NCBI Taxonomy" id="9606"/>
    <lineage>
        <taxon>Eukaryota</taxon>
        <taxon>Metazoa</taxon>
        <taxon>Chordata</taxon>
        <taxon>Craniata</taxon>
        <taxon>Vertebrata</taxon>
        <taxon>Euteleostomi</taxon>
        <taxon>Mammalia</taxon>
        <taxon>Eutheria</taxon>
        <taxon>Euarchontoglires</taxon>
        <taxon>Primates</taxon>
        <taxon>Haplorrhini</taxon>
        <taxon>Catarrhini</taxon>
        <taxon>Hominidae</taxon>
        <taxon>Homo</taxon>
    </lineage>
</organism>
<feature type="signal peptide" evidence="12">
    <location>
        <begin position="1"/>
        <end position="17"/>
    </location>
</feature>
<feature type="chain" id="PRO_0000017162" description="Phospholipid transfer protein">
    <location>
        <begin position="18"/>
        <end position="493"/>
    </location>
</feature>
<feature type="glycosylation site" description="N-linked (GlcNAc...) (complex) asparagine" evidence="5 6 7 9">
    <location>
        <position position="64"/>
    </location>
</feature>
<feature type="glycosylation site" description="N-linked (GlcNAc...) asparagine" evidence="5 9">
    <location>
        <position position="94"/>
    </location>
</feature>
<feature type="glycosylation site" description="N-linked (GlcNAc...) (complex) asparagine" evidence="9">
    <location>
        <position position="117"/>
    </location>
</feature>
<feature type="glycosylation site" description="N-linked (GlcNAc...) asparagine" evidence="5 6 9">
    <location>
        <position position="143"/>
    </location>
</feature>
<feature type="glycosylation site" description="N-linked (GlcNAc...) (complex) asparagine" evidence="5 6 9">
    <location>
        <position position="245"/>
    </location>
</feature>
<feature type="glycosylation site" description="N-linked (GlcNAc...) asparagine" evidence="5">
    <location>
        <position position="398"/>
    </location>
</feature>
<feature type="disulfide bond" evidence="2 9">
    <location>
        <begin position="146"/>
        <end position="185"/>
    </location>
</feature>
<feature type="splice variant" id="VSP_054028" description="In isoform 4." evidence="15">
    <location>
        <begin position="1"/>
        <end position="88"/>
    </location>
</feature>
<feature type="splice variant" id="VSP_045877" description="In isoform 3." evidence="15">
    <location>
        <begin position="68"/>
        <end position="162"/>
    </location>
</feature>
<feature type="splice variant" id="VSP_003050" description="In isoform 2." evidence="15 16">
    <original>FYDGGYINASAEGVSIRTGLELSRDPAGRMKVSNVSCQASVSRMHAAFGGTFK</original>
    <variation>L</variation>
    <location>
        <begin position="110"/>
        <end position="162"/>
    </location>
</feature>
<feature type="sequence variant" id="VAR_018879" description="In dbSNP:rs11569636." evidence="14">
    <original>S</original>
    <variation>Y</variation>
    <location>
        <position position="124"/>
    </location>
</feature>
<feature type="sequence variant" id="VAR_017020" description="In dbSNP:rs56126980." evidence="4">
    <original>R</original>
    <variation>Q</variation>
    <location>
        <position position="282"/>
    </location>
</feature>
<feature type="sequence variant" id="VAR_017021" description="In dbSNP:rs144710772." evidence="4">
    <original>R</original>
    <variation>H</variation>
    <location>
        <position position="372"/>
    </location>
</feature>
<feature type="sequence variant" id="VAR_017022" description="In dbSNP:rs6065903." evidence="4">
    <original>R</original>
    <variation>W</variation>
    <location>
        <position position="380"/>
    </location>
</feature>
<feature type="sequence variant" id="VAR_018880" description="In dbSNP:rs11569675." evidence="14">
    <original>M</original>
    <variation>I</variation>
    <location>
        <position position="425"/>
    </location>
</feature>
<feature type="sequence variant" id="VAR_012073" description="In dbSNP:rs1804161.">
    <original>F</original>
    <variation>L</variation>
    <location>
        <position position="444"/>
    </location>
</feature>
<feature type="sequence variant" id="VAR_012074" description="In dbSNP:rs1056929.">
    <original>T</original>
    <variation>K</variation>
    <location>
        <position position="487"/>
    </location>
</feature>
<feature type="mutagenesis site" description="Increased nuclear localization; when associated with A-94; A-117 and A-143." evidence="8">
    <original>N</original>
    <variation>A</variation>
    <location>
        <position position="64"/>
    </location>
</feature>
<feature type="mutagenesis site" description="Significant reduction in phospholipid transfer activity. No effect on secretion." evidence="9">
    <original>S</original>
    <variation>A</variation>
    <location>
        <position position="66"/>
    </location>
</feature>
<feature type="mutagenesis site" description="Increased nuclear localization; when associated with A-64; A-117 and A-143." evidence="8">
    <original>N</original>
    <variation>A</variation>
    <location>
        <position position="94"/>
    </location>
</feature>
<feature type="mutagenesis site" description="Significant reduction in phospholipid transfer activity. Increased secretion." evidence="9">
    <original>S</original>
    <variation>A</variation>
    <location>
        <position position="96"/>
    </location>
</feature>
<feature type="mutagenesis site" description="Increased nuclear localization; when associated with A-64; A-94 and A-143." evidence="8">
    <original>N</original>
    <variation>A</variation>
    <location>
        <position position="117"/>
    </location>
</feature>
<feature type="mutagenesis site" description="Significant reduction in phospholipid transfer activity. Increased secretion." evidence="9">
    <original>S</original>
    <variation>A</variation>
    <location>
        <position position="119"/>
    </location>
</feature>
<feature type="mutagenesis site" description="Increased nuclear localization; when associated with A-64; A-94 and A-117." evidence="8">
    <original>N</original>
    <variation>A</variation>
    <location>
        <position position="143"/>
    </location>
</feature>
<feature type="mutagenesis site" description="Significant reduction in phospholipid transfer activity. Reduced secretion." evidence="9">
    <original>S</original>
    <variation>A</variation>
    <location>
        <position position="145"/>
    </location>
</feature>
<feature type="mutagenesis site" description="Significant reduction in HDL-binding and absence of lipid transfer activity." evidence="10">
    <original>M</original>
    <variation>E</variation>
    <location>
        <position position="176"/>
    </location>
</feature>
<feature type="mutagenesis site" description="Significant reduction in phospholipid transfer activity. Reduced secretion." evidence="9">
    <original>S</original>
    <variation>A</variation>
    <location>
        <position position="247"/>
    </location>
</feature>
<feature type="mutagenesis site" description="Significant reduction in phospholipid transfer activity. Reduced secretion." evidence="9">
    <original>S</original>
    <variation>A</variation>
    <location>
        <position position="400"/>
    </location>
</feature>
<feature type="sequence conflict" description="In Ref. 7; AAH19847/AAH19898." evidence="18" ref="7">
    <original>E</original>
    <variation>V</variation>
    <location>
        <position position="18"/>
    </location>
</feature>
<feature type="sequence conflict" description="In Ref. 4; BAG61226." evidence="18" ref="4">
    <original>A</original>
    <variation>V</variation>
    <location>
        <position position="331"/>
    </location>
</feature>
<feature type="sequence conflict" description="In Ref. 4; BAG56696." evidence="18" ref="4">
    <original>A</original>
    <variation>S</variation>
    <location>
        <position position="375"/>
    </location>
</feature>
<comment type="function">
    <text evidence="3 8 9 10 11 13 17">Mediates the transfer of phospholipids and free cholesterol from triglyceride-rich lipoproteins (low density lipoproteins or LDL and very low density lipoproteins or VLDL) into high-density lipoproteins (HDL) as well as the exchange of phospholipids between triglyceride-rich lipoproteins themselves (PubMed:11013307, PubMed:19321130, PubMed:21515415, PubMed:29883800, PubMed:7654777, PubMed:9132017). Facilitates the transfer of a spectrum of different lipid molecules, including diacylglycerol, phosphatidic acid, sphingomyelin, phosphatidylcholine, phosphatidylinositol, phosphatidylglycerol, cerebroside and phosphatidyl ethanolamine (PubMed:9132017). Plays an important role in HDL remodeling which involves modulating the size and composition of HDL (PubMed:29883800). Also plays a key role in the uptake of cholesterol from peripheral cells and tissues that is subsequently transported to the liver for degradation and excretion (PubMed:21736953). Two distinct forms of PLTP exist in plasma: an active form that can transfer phosphatidylcholine from phospholipid vesicles to HDL, and an inactive form that lacks this capability (PubMed:11013307).</text>
</comment>
<comment type="catalytic activity">
    <reaction evidence="3 8 9 10 11 13">
        <text>a 1,2-diacyl-sn-glycero-3-phosphocholine(in) = a 1,2-diacyl-sn-glycero-3-phosphocholine(out)</text>
        <dbReference type="Rhea" id="RHEA:38571"/>
        <dbReference type="ChEBI" id="CHEBI:57643"/>
    </reaction>
    <physiologicalReaction direction="left-to-right" evidence="19">
        <dbReference type="Rhea" id="RHEA:38572"/>
    </physiologicalReaction>
</comment>
<comment type="catalytic activity">
    <reaction evidence="13">
        <text>a 1,2-diacyl-sn-glycero-3-phosphoethanolamine(in) = a 1,2-diacyl-sn-glycero-3-phosphoethanolamine(out)</text>
        <dbReference type="Rhea" id="RHEA:38895"/>
        <dbReference type="ChEBI" id="CHEBI:64612"/>
    </reaction>
    <physiologicalReaction direction="left-to-right" evidence="19">
        <dbReference type="Rhea" id="RHEA:38896"/>
    </physiologicalReaction>
</comment>
<comment type="catalytic activity">
    <reaction evidence="13">
        <text>a 1,2-diacyl-sn-glycerol(in) = a 1,2-diacyl-sn-glycerol(out)</text>
        <dbReference type="Rhea" id="RHEA:39723"/>
        <dbReference type="ChEBI" id="CHEBI:17815"/>
    </reaction>
    <physiologicalReaction direction="left-to-right" evidence="19">
        <dbReference type="Rhea" id="RHEA:39724"/>
    </physiologicalReaction>
</comment>
<comment type="catalytic activity">
    <reaction evidence="13">
        <text>a 1,2-diacyl-sn-glycero-3-phosphate(in) = a 1,2-diacyl-sn-glycero-3-phosphate(out)</text>
        <dbReference type="Rhea" id="RHEA:36435"/>
        <dbReference type="ChEBI" id="CHEBI:58608"/>
    </reaction>
    <physiologicalReaction direction="left-to-right" evidence="19">
        <dbReference type="Rhea" id="RHEA:36436"/>
    </physiologicalReaction>
</comment>
<comment type="catalytic activity">
    <reaction evidence="13">
        <text>a sphingomyelin(in) = a sphingomyelin(out)</text>
        <dbReference type="Rhea" id="RHEA:39727"/>
        <dbReference type="ChEBI" id="CHEBI:17636"/>
    </reaction>
    <physiologicalReaction direction="left-to-right" evidence="19">
        <dbReference type="Rhea" id="RHEA:39728"/>
    </physiologicalReaction>
</comment>
<comment type="catalytic activity">
    <reaction evidence="13">
        <text>a 1,2-diacyl-sn-glycero-3-phospho-(1'-sn-glycerol)(in) = a 1,2-diacyl-sn-glycero-3-phospho-(1'-sn-glycerol)(out)</text>
        <dbReference type="Rhea" id="RHEA:39743"/>
        <dbReference type="ChEBI" id="CHEBI:64716"/>
    </reaction>
    <physiologicalReaction direction="left-to-right" evidence="19">
        <dbReference type="Rhea" id="RHEA:39744"/>
    </physiologicalReaction>
</comment>
<comment type="catalytic activity">
    <reaction evidence="1">
        <text>a 1,2-diacyl-sn-glycero-3-phospho-(1D-myo-inositol)(in) = a 1,2-diacyl-sn-glycero-3-phospho-(1D-myo-inositol)(out)</text>
        <dbReference type="Rhea" id="RHEA:38691"/>
        <dbReference type="ChEBI" id="CHEBI:57880"/>
    </reaction>
    <physiologicalReaction direction="left-to-right" evidence="1">
        <dbReference type="Rhea" id="RHEA:38692"/>
    </physiologicalReaction>
</comment>
<comment type="catalytic activity">
    <reaction evidence="1">
        <text>1-hexadecanoyl-2-(5Z,8Z,11Z,14Z-eicosatetraenoyl)-sn-glycero-3-phosphoethanolamine(in) = 1-hexadecanoyl-2-(5Z,8Z,11Z,14Z-eicosatetraenoyl)-sn-glycero-3-phosphoethanolamine(out)</text>
        <dbReference type="Rhea" id="RHEA:46492"/>
        <dbReference type="ChEBI" id="CHEBI:73009"/>
    </reaction>
    <physiologicalReaction direction="left-to-right" evidence="1">
        <dbReference type="Rhea" id="RHEA:46493"/>
    </physiologicalReaction>
</comment>
<comment type="catalytic activity">
    <reaction evidence="1">
        <text>N-(hexadecanoyl)-sphing-4-enine-1-phosphocholine(in) = N-(hexadecanoyl)-sphing-4-enine-1-phosphocholine(out)</text>
        <dbReference type="Rhea" id="RHEA:46496"/>
        <dbReference type="ChEBI" id="CHEBI:78646"/>
    </reaction>
    <physiologicalReaction direction="left-to-right" evidence="1">
        <dbReference type="Rhea" id="RHEA:46497"/>
    </physiologicalReaction>
</comment>
<comment type="catalytic activity">
    <reaction evidence="1">
        <text>1,2-dihexadecanoyl-sn-glycero-3-phosphocholine(in) = 1,2-dihexadecanoyl-sn-glycero-3-phosphocholine(out)</text>
        <dbReference type="Rhea" id="RHEA:46488"/>
        <dbReference type="ChEBI" id="CHEBI:72999"/>
    </reaction>
    <physiologicalReaction direction="left-to-right" evidence="1">
        <dbReference type="Rhea" id="RHEA:46489"/>
    </physiologicalReaction>
</comment>
<comment type="interaction">
    <interactant intactId="EBI-12701312">
        <id>P55058-2</id>
    </interactant>
    <interactant intactId="EBI-748974">
        <id>Q96CV9</id>
        <label>OPTN</label>
    </interactant>
    <organismsDiffer>false</organismsDiffer>
    <experiments>3</experiments>
</comment>
<comment type="subcellular location">
    <subcellularLocation>
        <location evidence="8">Secreted</location>
    </subcellularLocation>
    <subcellularLocation>
        <location evidence="8">Nucleus</location>
    </subcellularLocation>
    <text evidence="8">Nuclear export is XPO1/CRM1-dependent.</text>
</comment>
<comment type="alternative products">
    <event type="alternative splicing"/>
    <isoform>
        <id>P55058-1</id>
        <name>1</name>
        <sequence type="displayed"/>
    </isoform>
    <isoform>
        <id>P55058-2</id>
        <name>2</name>
        <sequence type="described" ref="VSP_003050"/>
    </isoform>
    <isoform>
        <id>P55058-3</id>
        <name>3</name>
        <sequence type="described" ref="VSP_045877"/>
    </isoform>
    <isoform>
        <id>P55058-4</id>
        <name>4</name>
        <sequence type="described" ref="VSP_054028"/>
    </isoform>
</comment>
<comment type="tissue specificity">
    <text evidence="8 11">Widely expressed. Highest level of expression in the ovary, thymus and placenta, with moderate levels found in the pancreas, small intestine, testis, lung and prostrate. Low level expression in the kidney, liver and spleen, with very low levels found in the heart, colon, skeletal muscle, leukocytes and brain. Expressed in the cortical neurons.</text>
</comment>
<comment type="PTM">
    <text evidence="9">Glycosylation is necessary for secretion and its phospholipid transfer activity.</text>
</comment>
<comment type="similarity">
    <text evidence="18">Belongs to the BPI/LBP/Plunc superfamily. BPI/LBP family.</text>
</comment>
<name>PLTP_HUMAN</name>
<dbReference type="EMBL" id="L26232">
    <property type="protein sequence ID" value="AAA36443.1"/>
    <property type="molecule type" value="mRNA"/>
</dbReference>
<dbReference type="EMBL" id="AB076694">
    <property type="protein sequence ID" value="BAB79630.1"/>
    <property type="molecule type" value="mRNA"/>
</dbReference>
<dbReference type="EMBL" id="AL008726">
    <property type="protein sequence ID" value="CAA15499.1"/>
    <property type="molecule type" value="Genomic_DNA"/>
</dbReference>
<dbReference type="EMBL" id="AK289371">
    <property type="protein sequence ID" value="BAF82060.1"/>
    <property type="molecule type" value="mRNA"/>
</dbReference>
<dbReference type="EMBL" id="AK293150">
    <property type="protein sequence ID" value="BAG56696.1"/>
    <property type="molecule type" value="mRNA"/>
</dbReference>
<dbReference type="EMBL" id="AK299181">
    <property type="protein sequence ID" value="BAG61226.1"/>
    <property type="molecule type" value="mRNA"/>
</dbReference>
<dbReference type="EMBL" id="AL008726">
    <property type="protein sequence ID" value="CAC36020.1"/>
    <property type="molecule type" value="Genomic_DNA"/>
</dbReference>
<dbReference type="EMBL" id="AY509570">
    <property type="protein sequence ID" value="AAR87775.1"/>
    <property type="molecule type" value="Genomic_DNA"/>
</dbReference>
<dbReference type="EMBL" id="CH471077">
    <property type="protein sequence ID" value="EAW75782.1"/>
    <property type="molecule type" value="Genomic_DNA"/>
</dbReference>
<dbReference type="EMBL" id="CH471077">
    <property type="protein sequence ID" value="EAW75781.1"/>
    <property type="molecule type" value="Genomic_DNA"/>
</dbReference>
<dbReference type="EMBL" id="CH471077">
    <property type="protein sequence ID" value="EAW75783.1"/>
    <property type="molecule type" value="Genomic_DNA"/>
</dbReference>
<dbReference type="EMBL" id="CH471077">
    <property type="protein sequence ID" value="EAW75785.1"/>
    <property type="molecule type" value="Genomic_DNA"/>
</dbReference>
<dbReference type="EMBL" id="CH471077">
    <property type="protein sequence ID" value="EAW75787.1"/>
    <property type="molecule type" value="Genomic_DNA"/>
</dbReference>
<dbReference type="EMBL" id="BC005045">
    <property type="protein sequence ID" value="AAH05045.1"/>
    <property type="molecule type" value="mRNA"/>
</dbReference>
<dbReference type="EMBL" id="BC019847">
    <property type="protein sequence ID" value="AAH19847.1"/>
    <property type="molecule type" value="mRNA"/>
</dbReference>
<dbReference type="EMBL" id="BC019898">
    <property type="protein sequence ID" value="AAH19898.1"/>
    <property type="molecule type" value="mRNA"/>
</dbReference>
<dbReference type="CCDS" id="CCDS13386.1">
    <molecule id="P55058-1"/>
</dbReference>
<dbReference type="CCDS" id="CCDS13387.1">
    <molecule id="P55058-2"/>
</dbReference>
<dbReference type="CCDS" id="CCDS56196.1">
    <molecule id="P55058-4"/>
</dbReference>
<dbReference type="CCDS" id="CCDS56197.1">
    <molecule id="P55058-3"/>
</dbReference>
<dbReference type="PIR" id="A53533">
    <property type="entry name" value="A53533"/>
</dbReference>
<dbReference type="RefSeq" id="NP_001229849.1">
    <molecule id="P55058-3"/>
    <property type="nucleotide sequence ID" value="NM_001242920.2"/>
</dbReference>
<dbReference type="RefSeq" id="NP_001229850.1">
    <molecule id="P55058-4"/>
    <property type="nucleotide sequence ID" value="NM_001242921.1"/>
</dbReference>
<dbReference type="RefSeq" id="NP_006218.1">
    <molecule id="P55058-1"/>
    <property type="nucleotide sequence ID" value="NM_006227.4"/>
</dbReference>
<dbReference type="RefSeq" id="NP_872617.1">
    <molecule id="P55058-2"/>
    <property type="nucleotide sequence ID" value="NM_182676.3"/>
</dbReference>
<dbReference type="RefSeq" id="XP_054179506.1">
    <molecule id="P55058-4"/>
    <property type="nucleotide sequence ID" value="XM_054323531.1"/>
</dbReference>
<dbReference type="SMR" id="P55058"/>
<dbReference type="BioGRID" id="111374">
    <property type="interactions" value="54"/>
</dbReference>
<dbReference type="FunCoup" id="P55058">
    <property type="interactions" value="339"/>
</dbReference>
<dbReference type="IntAct" id="P55058">
    <property type="interactions" value="44"/>
</dbReference>
<dbReference type="STRING" id="9606.ENSP00000417138"/>
<dbReference type="BindingDB" id="P55058"/>
<dbReference type="ChEMBL" id="CHEMBL5962"/>
<dbReference type="DrugBank" id="DB00163">
    <property type="generic name" value="Vitamin E"/>
</dbReference>
<dbReference type="SwissLipids" id="SLP:000000469"/>
<dbReference type="TCDB" id="1.C.40.1.4">
    <property type="family name" value="the bactericidal permeability increasing protein (bpip) family"/>
</dbReference>
<dbReference type="GlyConnect" id="683">
    <property type="glycosylation" value="16 N-Linked glycans (5 sites)"/>
</dbReference>
<dbReference type="GlyCosmos" id="P55058">
    <property type="glycosylation" value="7 sites, 22 glycans"/>
</dbReference>
<dbReference type="GlyGen" id="P55058">
    <property type="glycosylation" value="12 sites, 76 N-linked glycans (5 sites), 2 O-linked glycans (6 sites)"/>
</dbReference>
<dbReference type="iPTMnet" id="P55058"/>
<dbReference type="PhosphoSitePlus" id="P55058"/>
<dbReference type="BioMuta" id="PLTP"/>
<dbReference type="DMDM" id="1709662"/>
<dbReference type="CPTAC" id="CPTAC-1321"/>
<dbReference type="CPTAC" id="non-CPTAC-1145"/>
<dbReference type="jPOST" id="P55058"/>
<dbReference type="MassIVE" id="P55058"/>
<dbReference type="PaxDb" id="9606-ENSP00000417138"/>
<dbReference type="PeptideAtlas" id="P55058"/>
<dbReference type="PRIDE" id="P55058"/>
<dbReference type="ProteomicsDB" id="18550"/>
<dbReference type="ProteomicsDB" id="56769">
    <molecule id="P55058-1"/>
</dbReference>
<dbReference type="ProteomicsDB" id="56770">
    <molecule id="P55058-2"/>
</dbReference>
<dbReference type="Pumba" id="P55058"/>
<dbReference type="TopDownProteomics" id="P55058-1">
    <molecule id="P55058-1"/>
</dbReference>
<dbReference type="Antibodypedia" id="27873">
    <property type="antibodies" value="322 antibodies from 32 providers"/>
</dbReference>
<dbReference type="DNASU" id="5360"/>
<dbReference type="Ensembl" id="ENST00000354050.8">
    <molecule id="P55058-2"/>
    <property type="protein sequence ID" value="ENSP00000335290.4"/>
    <property type="gene ID" value="ENSG00000100979.15"/>
</dbReference>
<dbReference type="Ensembl" id="ENST00000372420.5">
    <molecule id="P55058-4"/>
    <property type="protein sequence ID" value="ENSP00000361497.1"/>
    <property type="gene ID" value="ENSG00000100979.15"/>
</dbReference>
<dbReference type="Ensembl" id="ENST00000372431.8">
    <molecule id="P55058-1"/>
    <property type="protein sequence ID" value="ENSP00000361508.3"/>
    <property type="gene ID" value="ENSG00000100979.15"/>
</dbReference>
<dbReference type="Ensembl" id="ENST00000420868.2">
    <molecule id="P55058-3"/>
    <property type="protein sequence ID" value="ENSP00000411671.2"/>
    <property type="gene ID" value="ENSG00000100979.15"/>
</dbReference>
<dbReference type="Ensembl" id="ENST00000477313.5">
    <molecule id="P55058-1"/>
    <property type="protein sequence ID" value="ENSP00000417138.1"/>
    <property type="gene ID" value="ENSG00000100979.15"/>
</dbReference>
<dbReference type="GeneID" id="5360"/>
<dbReference type="KEGG" id="hsa:5360"/>
<dbReference type="MANE-Select" id="ENST00000372431.8">
    <property type="protein sequence ID" value="ENSP00000361508.3"/>
    <property type="RefSeq nucleotide sequence ID" value="NM_006227.4"/>
    <property type="RefSeq protein sequence ID" value="NP_006218.1"/>
</dbReference>
<dbReference type="UCSC" id="uc002xql.3">
    <molecule id="P55058-1"/>
    <property type="organism name" value="human"/>
</dbReference>
<dbReference type="AGR" id="HGNC:9093"/>
<dbReference type="CTD" id="5360"/>
<dbReference type="DisGeNET" id="5360"/>
<dbReference type="GeneCards" id="PLTP"/>
<dbReference type="HGNC" id="HGNC:9093">
    <property type="gene designation" value="PLTP"/>
</dbReference>
<dbReference type="HPA" id="ENSG00000100979">
    <property type="expression patterns" value="Low tissue specificity"/>
</dbReference>
<dbReference type="MIM" id="172425">
    <property type="type" value="gene"/>
</dbReference>
<dbReference type="neXtProt" id="NX_P55058"/>
<dbReference type="OpenTargets" id="ENSG00000100979"/>
<dbReference type="PharmGKB" id="PA273"/>
<dbReference type="VEuPathDB" id="HostDB:ENSG00000100979"/>
<dbReference type="eggNOG" id="KOG4160">
    <property type="taxonomic scope" value="Eukaryota"/>
</dbReference>
<dbReference type="GeneTree" id="ENSGT01100000263546"/>
<dbReference type="HOGENOM" id="CLU_028970_2_0_1"/>
<dbReference type="InParanoid" id="P55058"/>
<dbReference type="OMA" id="TTGMRFF"/>
<dbReference type="OrthoDB" id="8862579at2759"/>
<dbReference type="PAN-GO" id="P55058">
    <property type="GO annotations" value="14 GO annotations based on evolutionary models"/>
</dbReference>
<dbReference type="PhylomeDB" id="P55058"/>
<dbReference type="TreeFam" id="TF315617"/>
<dbReference type="PathwayCommons" id="P55058"/>
<dbReference type="Reactome" id="R-HSA-8964058">
    <property type="pathway name" value="HDL remodeling"/>
</dbReference>
<dbReference type="Reactome" id="R-HSA-9029569">
    <property type="pathway name" value="NR1H3 &amp; NR1H2 regulate gene expression linked to cholesterol transport and efflux"/>
</dbReference>
<dbReference type="SignaLink" id="P55058"/>
<dbReference type="BioGRID-ORCS" id="5360">
    <property type="hits" value="5 hits in 1153 CRISPR screens"/>
</dbReference>
<dbReference type="ChiTaRS" id="PLTP">
    <property type="organism name" value="human"/>
</dbReference>
<dbReference type="GeneWiki" id="Phospholipid_transfer_protein"/>
<dbReference type="GenomeRNAi" id="5360"/>
<dbReference type="Pharos" id="P55058">
    <property type="development level" value="Tbio"/>
</dbReference>
<dbReference type="PRO" id="PR:P55058"/>
<dbReference type="Proteomes" id="UP000005640">
    <property type="component" value="Chromosome 20"/>
</dbReference>
<dbReference type="RNAct" id="P55058">
    <property type="molecule type" value="protein"/>
</dbReference>
<dbReference type="Bgee" id="ENSG00000100979">
    <property type="expression patterns" value="Expressed in right coronary artery and 196 other cell types or tissues"/>
</dbReference>
<dbReference type="GO" id="GO:0005576">
    <property type="term" value="C:extracellular region"/>
    <property type="evidence" value="ECO:0000314"/>
    <property type="project" value="UniProtKB"/>
</dbReference>
<dbReference type="GO" id="GO:0005615">
    <property type="term" value="C:extracellular space"/>
    <property type="evidence" value="ECO:0007005"/>
    <property type="project" value="UniProtKB"/>
</dbReference>
<dbReference type="GO" id="GO:0034364">
    <property type="term" value="C:high-density lipoprotein particle"/>
    <property type="evidence" value="ECO:0000314"/>
    <property type="project" value="BHF-UCL"/>
</dbReference>
<dbReference type="GO" id="GO:0005634">
    <property type="term" value="C:nucleus"/>
    <property type="evidence" value="ECO:0000314"/>
    <property type="project" value="UniProtKB"/>
</dbReference>
<dbReference type="GO" id="GO:0097001">
    <property type="term" value="F:ceramide binding"/>
    <property type="evidence" value="ECO:0000314"/>
    <property type="project" value="BHF-UCL"/>
</dbReference>
<dbReference type="GO" id="GO:0120017">
    <property type="term" value="F:ceramide transfer activity"/>
    <property type="evidence" value="ECO:0000318"/>
    <property type="project" value="GO_Central"/>
</dbReference>
<dbReference type="GO" id="GO:0140340">
    <property type="term" value="F:cerebroside transfer activity"/>
    <property type="evidence" value="ECO:0000314"/>
    <property type="project" value="BHF-UCL"/>
</dbReference>
<dbReference type="GO" id="GO:0120020">
    <property type="term" value="F:cholesterol transfer activity"/>
    <property type="evidence" value="ECO:0000250"/>
    <property type="project" value="UniProtKB"/>
</dbReference>
<dbReference type="GO" id="GO:0140337">
    <property type="term" value="F:diacylglyceride transfer activity"/>
    <property type="evidence" value="ECO:0000314"/>
    <property type="project" value="BHF-UCL"/>
</dbReference>
<dbReference type="GO" id="GO:0019992">
    <property type="term" value="F:diacylglycerol binding"/>
    <property type="evidence" value="ECO:0000314"/>
    <property type="project" value="BHF-UCL"/>
</dbReference>
<dbReference type="GO" id="GO:0008035">
    <property type="term" value="F:high-density lipoprotein particle binding"/>
    <property type="evidence" value="ECO:0000314"/>
    <property type="project" value="UniProtKB"/>
</dbReference>
<dbReference type="GO" id="GO:0030169">
    <property type="term" value="F:low-density lipoprotein particle binding"/>
    <property type="evidence" value="ECO:0000314"/>
    <property type="project" value="UniProtKB"/>
</dbReference>
<dbReference type="GO" id="GO:0070300">
    <property type="term" value="F:phosphatidic acid binding"/>
    <property type="evidence" value="ECO:0000314"/>
    <property type="project" value="BHF-UCL"/>
</dbReference>
<dbReference type="GO" id="GO:1990050">
    <property type="term" value="F:phosphatidic acid transfer activity"/>
    <property type="evidence" value="ECO:0000314"/>
    <property type="project" value="BHF-UCL"/>
</dbReference>
<dbReference type="GO" id="GO:0031210">
    <property type="term" value="F:phosphatidylcholine binding"/>
    <property type="evidence" value="ECO:0000314"/>
    <property type="project" value="BHF-UCL"/>
</dbReference>
<dbReference type="GO" id="GO:0120019">
    <property type="term" value="F:phosphatidylcholine transfer activity"/>
    <property type="evidence" value="ECO:0000314"/>
    <property type="project" value="BHF-UCL"/>
</dbReference>
<dbReference type="GO" id="GO:0008429">
    <property type="term" value="F:phosphatidylethanolamine binding"/>
    <property type="evidence" value="ECO:0000314"/>
    <property type="project" value="BHF-UCL"/>
</dbReference>
<dbReference type="GO" id="GO:1904121">
    <property type="term" value="F:phosphatidylethanolamine transfer activity"/>
    <property type="evidence" value="ECO:0000314"/>
    <property type="project" value="BHF-UCL"/>
</dbReference>
<dbReference type="GO" id="GO:1901611">
    <property type="term" value="F:phosphatidylglycerol binding"/>
    <property type="evidence" value="ECO:0000314"/>
    <property type="project" value="BHF-UCL"/>
</dbReference>
<dbReference type="GO" id="GO:0140339">
    <property type="term" value="F:phosphatidylglycerol transfer activity"/>
    <property type="evidence" value="ECO:0000314"/>
    <property type="project" value="BHF-UCL"/>
</dbReference>
<dbReference type="GO" id="GO:0008526">
    <property type="term" value="F:phosphatidylinositol transfer activity"/>
    <property type="evidence" value="ECO:0000250"/>
    <property type="project" value="UniProtKB"/>
</dbReference>
<dbReference type="GO" id="GO:0120014">
    <property type="term" value="F:phospholipid transfer activity"/>
    <property type="evidence" value="ECO:0000314"/>
    <property type="project" value="UniProtKB"/>
</dbReference>
<dbReference type="GO" id="GO:0140338">
    <property type="term" value="F:sphingomyelin transfer activity"/>
    <property type="evidence" value="ECO:0000314"/>
    <property type="project" value="BHF-UCL"/>
</dbReference>
<dbReference type="GO" id="GO:0034189">
    <property type="term" value="F:very-low-density lipoprotein particle binding"/>
    <property type="evidence" value="ECO:0000314"/>
    <property type="project" value="UniProtKB"/>
</dbReference>
<dbReference type="GO" id="GO:0035627">
    <property type="term" value="P:ceramide transport"/>
    <property type="evidence" value="ECO:0000314"/>
    <property type="project" value="BHF-UCL"/>
</dbReference>
<dbReference type="GO" id="GO:0030317">
    <property type="term" value="P:flagellated sperm motility"/>
    <property type="evidence" value="ECO:0007669"/>
    <property type="project" value="Ensembl"/>
</dbReference>
<dbReference type="GO" id="GO:0046836">
    <property type="term" value="P:glycolipid transport"/>
    <property type="evidence" value="ECO:0000314"/>
    <property type="project" value="ARUK-UCL"/>
</dbReference>
<dbReference type="GO" id="GO:0034375">
    <property type="term" value="P:high-density lipoprotein particle remodeling"/>
    <property type="evidence" value="ECO:0000314"/>
    <property type="project" value="UniProtKB"/>
</dbReference>
<dbReference type="GO" id="GO:0006629">
    <property type="term" value="P:lipid metabolic process"/>
    <property type="evidence" value="ECO:0000304"/>
    <property type="project" value="ProtInc"/>
</dbReference>
<dbReference type="GO" id="GO:0006869">
    <property type="term" value="P:lipid transport"/>
    <property type="evidence" value="ECO:0000314"/>
    <property type="project" value="BHF-UCL"/>
</dbReference>
<dbReference type="GO" id="GO:0015914">
    <property type="term" value="P:phospholipid transport"/>
    <property type="evidence" value="ECO:0000314"/>
    <property type="project" value="BHF-UCL"/>
</dbReference>
<dbReference type="GO" id="GO:0010875">
    <property type="term" value="P:positive regulation of cholesterol efflux"/>
    <property type="evidence" value="ECO:0000314"/>
    <property type="project" value="AgBase"/>
</dbReference>
<dbReference type="GO" id="GO:0010189">
    <property type="term" value="P:vitamin E biosynthetic process"/>
    <property type="evidence" value="ECO:0007669"/>
    <property type="project" value="Ensembl"/>
</dbReference>
<dbReference type="CDD" id="cd00025">
    <property type="entry name" value="BPI1"/>
    <property type="match status" value="1"/>
</dbReference>
<dbReference type="CDD" id="cd00026">
    <property type="entry name" value="BPI2"/>
    <property type="match status" value="1"/>
</dbReference>
<dbReference type="FunFam" id="3.15.20.10:FF:000001">
    <property type="entry name" value="Phospholipid transfer protein"/>
    <property type="match status" value="1"/>
</dbReference>
<dbReference type="FunFam" id="3.15.10.10:FF:000001">
    <property type="entry name" value="phospholipid transfer protein-like"/>
    <property type="match status" value="1"/>
</dbReference>
<dbReference type="Gene3D" id="3.15.10.10">
    <property type="entry name" value="Bactericidal permeability-increasing protein, domain 1"/>
    <property type="match status" value="1"/>
</dbReference>
<dbReference type="Gene3D" id="3.15.20.10">
    <property type="entry name" value="Bactericidal permeability-increasing protein, domain 2"/>
    <property type="match status" value="1"/>
</dbReference>
<dbReference type="InterPro" id="IPR017943">
    <property type="entry name" value="Bactericidal_perm-incr_a/b_dom"/>
</dbReference>
<dbReference type="InterPro" id="IPR030675">
    <property type="entry name" value="BPI/LBP"/>
</dbReference>
<dbReference type="InterPro" id="IPR032942">
    <property type="entry name" value="BPI/LBP/Plunc"/>
</dbReference>
<dbReference type="InterPro" id="IPR001124">
    <property type="entry name" value="Lipid-bd_serum_glycop_C"/>
</dbReference>
<dbReference type="InterPro" id="IPR017954">
    <property type="entry name" value="Lipid-bd_serum_glycop_CS"/>
</dbReference>
<dbReference type="InterPro" id="IPR017942">
    <property type="entry name" value="Lipid-bd_serum_glycop_N"/>
</dbReference>
<dbReference type="PANTHER" id="PTHR10504">
    <property type="entry name" value="BACTERICIDAL PERMEABILITY-INCREASING BPI PROTEIN-RELATED"/>
    <property type="match status" value="1"/>
</dbReference>
<dbReference type="PANTHER" id="PTHR10504:SF16">
    <property type="entry name" value="PHOSPHOLIPID TRANSFER PROTEIN"/>
    <property type="match status" value="1"/>
</dbReference>
<dbReference type="Pfam" id="PF01273">
    <property type="entry name" value="LBP_BPI_CETP"/>
    <property type="match status" value="1"/>
</dbReference>
<dbReference type="Pfam" id="PF02886">
    <property type="entry name" value="LBP_BPI_CETP_C"/>
    <property type="match status" value="1"/>
</dbReference>
<dbReference type="PIRSF" id="PIRSF002417">
    <property type="entry name" value="Lipid_binding_protein"/>
    <property type="match status" value="1"/>
</dbReference>
<dbReference type="SMART" id="SM00328">
    <property type="entry name" value="BPI1"/>
    <property type="match status" value="1"/>
</dbReference>
<dbReference type="SMART" id="SM00329">
    <property type="entry name" value="BPI2"/>
    <property type="match status" value="1"/>
</dbReference>
<dbReference type="SUPFAM" id="SSF55394">
    <property type="entry name" value="Bactericidal permeability-increasing protein, BPI"/>
    <property type="match status" value="2"/>
</dbReference>
<dbReference type="PROSITE" id="PS00400">
    <property type="entry name" value="LBP_BPI_CETP"/>
    <property type="match status" value="1"/>
</dbReference>
<gene>
    <name type="primary">PLTP</name>
</gene>